<geneLocation type="chloroplast"/>
<comment type="function">
    <text evidence="1">Photosystem II (PSII) is a light-driven water:plastoquinone oxidoreductase that uses light energy to abstract electrons from H(2)O, generating O(2) and a proton gradient subsequently used for ATP formation. It consists of a core antenna complex that captures photons, and an electron transfer chain that converts photonic excitation into a charge separation. The D1/D2 (PsbA/PsbD) reaction center heterodimer binds P680, the primary electron donor of PSII as well as several subsequent electron acceptors.</text>
</comment>
<comment type="catalytic activity">
    <reaction evidence="1">
        <text>2 a plastoquinone + 4 hnu + 2 H2O = 2 a plastoquinol + O2</text>
        <dbReference type="Rhea" id="RHEA:36359"/>
        <dbReference type="Rhea" id="RHEA-COMP:9561"/>
        <dbReference type="Rhea" id="RHEA-COMP:9562"/>
        <dbReference type="ChEBI" id="CHEBI:15377"/>
        <dbReference type="ChEBI" id="CHEBI:15379"/>
        <dbReference type="ChEBI" id="CHEBI:17757"/>
        <dbReference type="ChEBI" id="CHEBI:30212"/>
        <dbReference type="ChEBI" id="CHEBI:62192"/>
        <dbReference type="EC" id="1.10.3.9"/>
    </reaction>
</comment>
<comment type="cofactor">
    <text evidence="1">The D1/D2 heterodimer binds P680, chlorophylls that are the primary electron donor of PSII, and subsequent electron acceptors. It shares a non-heme iron and each subunit binds pheophytin, quinone, additional chlorophylls, carotenoids and lipids. D1 provides most of the ligands for the Mn4-Ca-O5 cluster of the oxygen-evolving complex (OEC). There is also a Cl(-1) ion associated with D1 and D2, which is required for oxygen evolution. The PSII complex binds additional chlorophylls, carotenoids and specific lipids.</text>
</comment>
<comment type="subunit">
    <text evidence="1">PSII is composed of 1 copy each of membrane proteins PsbA, PsbB, PsbC, PsbD, PsbE, PsbF, PsbH, PsbI, PsbJ, PsbK, PsbL, PsbM, PsbT, PsbX, PsbY, PsbZ, Psb30/Ycf12, at least 3 peripheral proteins of the oxygen-evolving complex and a large number of cofactors. It forms dimeric complexes.</text>
</comment>
<comment type="subcellular location">
    <subcellularLocation>
        <location evidence="1">Plastid</location>
        <location evidence="1">Chloroplast thylakoid membrane</location>
        <topology evidence="1">Multi-pass membrane protein</topology>
    </subcellularLocation>
</comment>
<comment type="PTM">
    <text evidence="1">Tyr-157 forms a radical intermediate that is referred to as redox-active TyrZ, YZ or Y-Z.</text>
</comment>
<comment type="miscellaneous">
    <text evidence="1">2 of the reaction center chlorophylls (ChlD1 and ChlD2) are entirely coordinated by water.</text>
</comment>
<comment type="miscellaneous">
    <text evidence="1">Herbicides such as atrazine, BNT, diuron or ioxynil bind in the Q(B) binding site and block subsequent electron transfer.</text>
</comment>
<comment type="similarity">
    <text evidence="1">Belongs to the reaction center PufL/M/PsbA/D family.</text>
</comment>
<proteinExistence type="inferred from homology"/>
<reference key="1">
    <citation type="journal article" date="2001" name="FEBS Lett.">
        <title>'Empty' minicircles and petB/atpA and psbD/psbE (cytb559 alpha) genes in tandem in Amphidinium carterae plastid DNA.</title>
        <authorList>
            <person name="Hiller R.G."/>
        </authorList>
    </citation>
    <scope>NUCLEOTIDE SEQUENCE [GENOMIC DNA]</scope>
    <source>
        <strain>CS21</strain>
    </source>
</reference>
<name>PSBA_AMPCA</name>
<gene>
    <name evidence="1" type="primary">psbA</name>
</gene>
<organism>
    <name type="scientific">Amphidinium carterae</name>
    <name type="common">Dinoflagellate</name>
    <dbReference type="NCBI Taxonomy" id="2961"/>
    <lineage>
        <taxon>Eukaryota</taxon>
        <taxon>Sar</taxon>
        <taxon>Alveolata</taxon>
        <taxon>Dinophyceae</taxon>
        <taxon>Amphidiniales</taxon>
        <taxon>Amphidiniaceae</taxon>
        <taxon>Amphidinium</taxon>
    </lineage>
</organism>
<dbReference type="EC" id="1.10.3.9" evidence="1"/>
<dbReference type="EMBL" id="AJ311632">
    <property type="protein sequence ID" value="CAC34561.1"/>
    <property type="molecule type" value="Genomic_DNA"/>
</dbReference>
<dbReference type="SMR" id="Q9BBC1"/>
<dbReference type="GO" id="GO:0009535">
    <property type="term" value="C:chloroplast thylakoid membrane"/>
    <property type="evidence" value="ECO:0007669"/>
    <property type="project" value="UniProtKB-SubCell"/>
</dbReference>
<dbReference type="GO" id="GO:0009523">
    <property type="term" value="C:photosystem II"/>
    <property type="evidence" value="ECO:0007669"/>
    <property type="project" value="UniProtKB-KW"/>
</dbReference>
<dbReference type="GO" id="GO:0016168">
    <property type="term" value="F:chlorophyll binding"/>
    <property type="evidence" value="ECO:0007669"/>
    <property type="project" value="UniProtKB-UniRule"/>
</dbReference>
<dbReference type="GO" id="GO:0045156">
    <property type="term" value="F:electron transporter, transferring electrons within the cyclic electron transport pathway of photosynthesis activity"/>
    <property type="evidence" value="ECO:0007669"/>
    <property type="project" value="InterPro"/>
</dbReference>
<dbReference type="GO" id="GO:0005506">
    <property type="term" value="F:iron ion binding"/>
    <property type="evidence" value="ECO:0007669"/>
    <property type="project" value="UniProtKB-UniRule"/>
</dbReference>
<dbReference type="GO" id="GO:0016682">
    <property type="term" value="F:oxidoreductase activity, acting on diphenols and related substances as donors, oxygen as acceptor"/>
    <property type="evidence" value="ECO:0007669"/>
    <property type="project" value="UniProtKB-UniRule"/>
</dbReference>
<dbReference type="GO" id="GO:0009772">
    <property type="term" value="P:photosynthetic electron transport in photosystem II"/>
    <property type="evidence" value="ECO:0007669"/>
    <property type="project" value="InterPro"/>
</dbReference>
<dbReference type="GO" id="GO:0009635">
    <property type="term" value="P:response to herbicide"/>
    <property type="evidence" value="ECO:0007669"/>
    <property type="project" value="UniProtKB-KW"/>
</dbReference>
<dbReference type="Gene3D" id="1.20.85.10">
    <property type="entry name" value="Photosystem II protein D1-like"/>
    <property type="match status" value="1"/>
</dbReference>
<dbReference type="HAMAP" id="MF_01379">
    <property type="entry name" value="PSII_PsbA_D1"/>
    <property type="match status" value="1"/>
</dbReference>
<dbReference type="InterPro" id="IPR055266">
    <property type="entry name" value="D1/D2"/>
</dbReference>
<dbReference type="InterPro" id="IPR036854">
    <property type="entry name" value="Photo_II_D1/D2_sf"/>
</dbReference>
<dbReference type="InterPro" id="IPR000484">
    <property type="entry name" value="Photo_RC_L/M"/>
</dbReference>
<dbReference type="InterPro" id="IPR005867">
    <property type="entry name" value="PSII_D1"/>
</dbReference>
<dbReference type="NCBIfam" id="TIGR01151">
    <property type="entry name" value="psbA"/>
    <property type="match status" value="1"/>
</dbReference>
<dbReference type="PANTHER" id="PTHR33149:SF12">
    <property type="entry name" value="PHOTOSYSTEM II D2 PROTEIN"/>
    <property type="match status" value="1"/>
</dbReference>
<dbReference type="PANTHER" id="PTHR33149">
    <property type="entry name" value="PHOTOSYSTEM II PROTEIN D1"/>
    <property type="match status" value="1"/>
</dbReference>
<dbReference type="Pfam" id="PF00124">
    <property type="entry name" value="Photo_RC"/>
    <property type="match status" value="1"/>
</dbReference>
<dbReference type="PRINTS" id="PR00256">
    <property type="entry name" value="REACTNCENTRE"/>
</dbReference>
<dbReference type="SUPFAM" id="SSF81483">
    <property type="entry name" value="Bacterial photosystem II reaction centre, L and M subunits"/>
    <property type="match status" value="1"/>
</dbReference>
<sequence>MTSLIRSNSWGSFVQTITSSSNRLYIGWFGLLVFPLLSLATVAYITAFFLAPAVDIDGIREPVAGSLIYGNNIISGAVIPSSNAIGVHFYPLWESLGLDEWLYNGGTYQFVVFHFFLGVCGWMGREWEFSYRLGMRPWIFVAFSAPIAAAAAVFIIYPIGQGSFSDGMPLGIQGTFNFMLVFQAEHKILMHPFHILGVAGVFGGSLFSAMHGSLVSSSLLAETAGSESLNNGYVFGQEDETYSISAAHAYFGRLIFQYASFNNSRSLHFFLAAWPVIGIWITSLGVATMAFNLNGFNFNQSILDESGHYINSWADILNRADLGIEVMHERNAHNFPLDLA</sequence>
<evidence type="ECO:0000255" key="1">
    <source>
        <dbReference type="HAMAP-Rule" id="MF_01379"/>
    </source>
</evidence>
<accession>Q9BBC1</accession>
<keyword id="KW-0106">Calcium</keyword>
<keyword id="KW-0148">Chlorophyll</keyword>
<keyword id="KW-0150">Chloroplast</keyword>
<keyword id="KW-0157">Chromophore</keyword>
<keyword id="KW-0249">Electron transport</keyword>
<keyword id="KW-0359">Herbicide resistance</keyword>
<keyword id="KW-0408">Iron</keyword>
<keyword id="KW-0460">Magnesium</keyword>
<keyword id="KW-0464">Manganese</keyword>
<keyword id="KW-0472">Membrane</keyword>
<keyword id="KW-0479">Metal-binding</keyword>
<keyword id="KW-0560">Oxidoreductase</keyword>
<keyword id="KW-0602">Photosynthesis</keyword>
<keyword id="KW-0604">Photosystem II</keyword>
<keyword id="KW-0934">Plastid</keyword>
<keyword id="KW-0793">Thylakoid</keyword>
<keyword id="KW-0812">Transmembrane</keyword>
<keyword id="KW-1133">Transmembrane helix</keyword>
<keyword id="KW-0813">Transport</keyword>
<feature type="chain" id="PRO_0000316492" description="Photosystem II protein D1" evidence="1">
    <location>
        <begin position="1"/>
        <end position="340"/>
    </location>
</feature>
<feature type="transmembrane region" description="Helical" evidence="1">
    <location>
        <begin position="25"/>
        <end position="42"/>
    </location>
</feature>
<feature type="transmembrane region" description="Helical" evidence="1">
    <location>
        <begin position="114"/>
        <end position="129"/>
    </location>
</feature>
<feature type="transmembrane region" description="Helical" evidence="1">
    <location>
        <begin position="138"/>
        <end position="152"/>
    </location>
</feature>
<feature type="transmembrane region" description="Helical" evidence="1">
    <location>
        <begin position="193"/>
        <end position="214"/>
    </location>
</feature>
<feature type="transmembrane region" description="Helical" evidence="1">
    <location>
        <begin position="270"/>
        <end position="284"/>
    </location>
</feature>
<feature type="binding site" description="axial binding residue" evidence="1">
    <location>
        <position position="114"/>
    </location>
    <ligand>
        <name>chlorophyll a</name>
        <dbReference type="ChEBI" id="CHEBI:58416"/>
        <label>ChlzD1</label>
    </ligand>
    <ligandPart>
        <name>Mg</name>
        <dbReference type="ChEBI" id="CHEBI:25107"/>
    </ligandPart>
</feature>
<feature type="binding site" evidence="1">
    <location>
        <position position="122"/>
    </location>
    <ligand>
        <name>pheophytin a</name>
        <dbReference type="ChEBI" id="CHEBI:136840"/>
        <label>D1</label>
    </ligand>
</feature>
<feature type="binding site" evidence="1">
    <location>
        <position position="166"/>
    </location>
    <ligand>
        <name>[CaMn4O5] cluster</name>
        <dbReference type="ChEBI" id="CHEBI:189552"/>
    </ligand>
</feature>
<feature type="binding site" evidence="1">
    <location>
        <position position="185"/>
    </location>
    <ligand>
        <name>[CaMn4O5] cluster</name>
        <dbReference type="ChEBI" id="CHEBI:189552"/>
    </ligand>
</feature>
<feature type="binding site" description="axial binding residue" evidence="1">
    <location>
        <position position="194"/>
    </location>
    <ligand>
        <name>chlorophyll a</name>
        <dbReference type="ChEBI" id="CHEBI:58416"/>
        <label>PD1</label>
    </ligand>
    <ligandPart>
        <name>Mg</name>
        <dbReference type="ChEBI" id="CHEBI:25107"/>
    </ligandPart>
</feature>
<feature type="binding site" evidence="1">
    <location>
        <position position="211"/>
    </location>
    <ligand>
        <name>a quinone</name>
        <dbReference type="ChEBI" id="CHEBI:132124"/>
        <label>B</label>
    </ligand>
</feature>
<feature type="binding site" evidence="1">
    <location>
        <position position="211"/>
    </location>
    <ligand>
        <name>Fe cation</name>
        <dbReference type="ChEBI" id="CHEBI:24875"/>
        <note>ligand shared with heterodimeric partner</note>
    </ligand>
</feature>
<feature type="binding site" evidence="1">
    <location>
        <begin position="260"/>
        <end position="261"/>
    </location>
    <ligand>
        <name>a quinone</name>
        <dbReference type="ChEBI" id="CHEBI:132124"/>
        <label>B</label>
    </ligand>
</feature>
<feature type="binding site" evidence="1">
    <location>
        <position position="268"/>
    </location>
    <ligand>
        <name>Fe cation</name>
        <dbReference type="ChEBI" id="CHEBI:24875"/>
        <note>ligand shared with heterodimeric partner</note>
    </ligand>
</feature>
<feature type="binding site" evidence="1">
    <location>
        <position position="328"/>
    </location>
    <ligand>
        <name>[CaMn4O5] cluster</name>
        <dbReference type="ChEBI" id="CHEBI:189552"/>
    </ligand>
</feature>
<feature type="binding site" evidence="1">
    <location>
        <position position="329"/>
    </location>
    <ligand>
        <name>[CaMn4O5] cluster</name>
        <dbReference type="ChEBI" id="CHEBI:189552"/>
    </ligand>
</feature>
<feature type="binding site" evidence="1">
    <location>
        <position position="338"/>
    </location>
    <ligand>
        <name>[CaMn4O5] cluster</name>
        <dbReference type="ChEBI" id="CHEBI:189552"/>
    </ligand>
</feature>
<feature type="binding site" evidence="1">
    <location>
        <position position="340"/>
    </location>
    <ligand>
        <name>[CaMn4O5] cluster</name>
        <dbReference type="ChEBI" id="CHEBI:189552"/>
    </ligand>
</feature>
<feature type="site" description="Tyrosine radical intermediate" evidence="1">
    <location>
        <position position="157"/>
    </location>
</feature>
<feature type="site" description="Stabilizes free radical intermediate" evidence="1">
    <location>
        <position position="186"/>
    </location>
</feature>
<protein>
    <recommendedName>
        <fullName evidence="1">Photosystem II protein D1</fullName>
        <shortName evidence="1">PSII D1 protein</shortName>
        <ecNumber evidence="1">1.10.3.9</ecNumber>
    </recommendedName>
    <alternativeName>
        <fullName evidence="1">Photosystem II Q(B) protein</fullName>
    </alternativeName>
</protein>